<proteinExistence type="inferred from homology"/>
<comment type="function">
    <text evidence="1">Involved in pyrimidine catabolism. May facilitate the hydrolysis of carbamate, a reaction that can also occur spontaneously.</text>
</comment>
<comment type="catalytic activity">
    <reaction evidence="1">
        <text>carbamate + 2 H(+) = NH4(+) + CO2</text>
        <dbReference type="Rhea" id="RHEA:15649"/>
        <dbReference type="ChEBI" id="CHEBI:13941"/>
        <dbReference type="ChEBI" id="CHEBI:15378"/>
        <dbReference type="ChEBI" id="CHEBI:16526"/>
        <dbReference type="ChEBI" id="CHEBI:28938"/>
    </reaction>
</comment>
<comment type="similarity">
    <text evidence="1">Belongs to the AB hydrolase superfamily. Hydrolase RutD family.</text>
</comment>
<sequence>MKLSLSPPPYADAPVVVLISGLGGSGSYWLPQLAVLEQEYQVVCYDQRGTGNNPDTLAEDYSIAQMAAELHQALVAAGIEHYAVVGHALGALVGMQLALDYPASVTVLISVNGWLRINAHTRRCFQVRERLLYSGGAQAWVEAQPLFLYPADWMAARAPRLEAEDALALAHFQGKNNLLRRLNALKRADFSHHADRIRCPVQIICASDDLLVPSACSSELHAALPDSQKMVMRYGGHACNVTDPETFNALLLNGLASLLHHREAAL</sequence>
<gene>
    <name evidence="1" type="primary">rutD</name>
    <name type="ordered locus">SSON_1027</name>
</gene>
<keyword id="KW-0378">Hydrolase</keyword>
<keyword id="KW-1185">Reference proteome</keyword>
<protein>
    <recommendedName>
        <fullName evidence="1">Putative carbamate hydrolase RutD</fullName>
        <ecNumber evidence="1">3.5.1.-</ecNumber>
    </recommendedName>
    <alternativeName>
        <fullName evidence="1">Aminohydrolase</fullName>
    </alternativeName>
</protein>
<organism>
    <name type="scientific">Shigella sonnei (strain Ss046)</name>
    <dbReference type="NCBI Taxonomy" id="300269"/>
    <lineage>
        <taxon>Bacteria</taxon>
        <taxon>Pseudomonadati</taxon>
        <taxon>Pseudomonadota</taxon>
        <taxon>Gammaproteobacteria</taxon>
        <taxon>Enterobacterales</taxon>
        <taxon>Enterobacteriaceae</taxon>
        <taxon>Shigella</taxon>
    </lineage>
</organism>
<reference key="1">
    <citation type="journal article" date="2005" name="Nucleic Acids Res.">
        <title>Genome dynamics and diversity of Shigella species, the etiologic agents of bacillary dysentery.</title>
        <authorList>
            <person name="Yang F."/>
            <person name="Yang J."/>
            <person name="Zhang X."/>
            <person name="Chen L."/>
            <person name="Jiang Y."/>
            <person name="Yan Y."/>
            <person name="Tang X."/>
            <person name="Wang J."/>
            <person name="Xiong Z."/>
            <person name="Dong J."/>
            <person name="Xue Y."/>
            <person name="Zhu Y."/>
            <person name="Xu X."/>
            <person name="Sun L."/>
            <person name="Chen S."/>
            <person name="Nie H."/>
            <person name="Peng J."/>
            <person name="Xu J."/>
            <person name="Wang Y."/>
            <person name="Yuan Z."/>
            <person name="Wen Y."/>
            <person name="Yao Z."/>
            <person name="Shen Y."/>
            <person name="Qiang B."/>
            <person name="Hou Y."/>
            <person name="Yu J."/>
            <person name="Jin Q."/>
        </authorList>
    </citation>
    <scope>NUCLEOTIDE SEQUENCE [LARGE SCALE GENOMIC DNA]</scope>
    <source>
        <strain>Ss046</strain>
    </source>
</reference>
<evidence type="ECO:0000255" key="1">
    <source>
        <dbReference type="HAMAP-Rule" id="MF_00832"/>
    </source>
</evidence>
<name>RUTD_SHISS</name>
<feature type="chain" id="PRO_0000402985" description="Putative carbamate hydrolase RutD">
    <location>
        <begin position="1"/>
        <end position="266"/>
    </location>
</feature>
<feature type="domain" description="AB hydrolase-1" evidence="1">
    <location>
        <begin position="14"/>
        <end position="115"/>
    </location>
</feature>
<accession>Q3Z3A4</accession>
<dbReference type="EC" id="3.5.1.-" evidence="1"/>
<dbReference type="EMBL" id="CP000038">
    <property type="protein sequence ID" value="AAZ87758.1"/>
    <property type="molecule type" value="Genomic_DNA"/>
</dbReference>
<dbReference type="RefSeq" id="WP_001307099.1">
    <property type="nucleotide sequence ID" value="NC_007384.1"/>
</dbReference>
<dbReference type="SMR" id="Q3Z3A4"/>
<dbReference type="ESTHER" id="shifl-YCDJ">
    <property type="family name" value="RutD"/>
</dbReference>
<dbReference type="KEGG" id="ssn:SSON_1027"/>
<dbReference type="HOGENOM" id="CLU_020336_50_1_6"/>
<dbReference type="Proteomes" id="UP000002529">
    <property type="component" value="Chromosome"/>
</dbReference>
<dbReference type="GO" id="GO:0016811">
    <property type="term" value="F:hydrolase activity, acting on carbon-nitrogen (but not peptide) bonds, in linear amides"/>
    <property type="evidence" value="ECO:0007669"/>
    <property type="project" value="InterPro"/>
</dbReference>
<dbReference type="GO" id="GO:0019740">
    <property type="term" value="P:nitrogen utilization"/>
    <property type="evidence" value="ECO:0007669"/>
    <property type="project" value="UniProtKB-UniRule"/>
</dbReference>
<dbReference type="GO" id="GO:0006212">
    <property type="term" value="P:uracil catabolic process"/>
    <property type="evidence" value="ECO:0007669"/>
    <property type="project" value="UniProtKB-UniRule"/>
</dbReference>
<dbReference type="FunFam" id="3.40.50.1820:FF:000052">
    <property type="entry name" value="Putative aminoacrylate hydrolase RutD"/>
    <property type="match status" value="1"/>
</dbReference>
<dbReference type="Gene3D" id="3.40.50.1820">
    <property type="entry name" value="alpha/beta hydrolase"/>
    <property type="match status" value="1"/>
</dbReference>
<dbReference type="HAMAP" id="MF_00832">
    <property type="entry name" value="RutD"/>
    <property type="match status" value="1"/>
</dbReference>
<dbReference type="InterPro" id="IPR000073">
    <property type="entry name" value="AB_hydrolase_1"/>
</dbReference>
<dbReference type="InterPro" id="IPR029058">
    <property type="entry name" value="AB_hydrolase_fold"/>
</dbReference>
<dbReference type="InterPro" id="IPR050266">
    <property type="entry name" value="AB_hydrolase_sf"/>
</dbReference>
<dbReference type="InterPro" id="IPR019913">
    <property type="entry name" value="Pyrimidine_utilisation_RutD"/>
</dbReference>
<dbReference type="NCBIfam" id="TIGR03611">
    <property type="entry name" value="RutD"/>
    <property type="match status" value="1"/>
</dbReference>
<dbReference type="PANTHER" id="PTHR43798">
    <property type="entry name" value="MONOACYLGLYCEROL LIPASE"/>
    <property type="match status" value="1"/>
</dbReference>
<dbReference type="Pfam" id="PF00561">
    <property type="entry name" value="Abhydrolase_1"/>
    <property type="match status" value="1"/>
</dbReference>
<dbReference type="SUPFAM" id="SSF53474">
    <property type="entry name" value="alpha/beta-Hydrolases"/>
    <property type="match status" value="1"/>
</dbReference>